<protein>
    <recommendedName>
        <fullName evidence="1">Transcriptional repressor NrdR</fullName>
    </recommendedName>
</protein>
<reference key="1">
    <citation type="submission" date="2006-06" db="EMBL/GenBank/DDBJ databases">
        <title>Complete sequence of chromosome of Mesorhizobium sp. BNC1.</title>
        <authorList>
            <consortium name="US DOE Joint Genome Institute"/>
            <person name="Copeland A."/>
            <person name="Lucas S."/>
            <person name="Lapidus A."/>
            <person name="Barry K."/>
            <person name="Detter J.C."/>
            <person name="Glavina del Rio T."/>
            <person name="Hammon N."/>
            <person name="Israni S."/>
            <person name="Dalin E."/>
            <person name="Tice H."/>
            <person name="Pitluck S."/>
            <person name="Chertkov O."/>
            <person name="Brettin T."/>
            <person name="Bruce D."/>
            <person name="Han C."/>
            <person name="Tapia R."/>
            <person name="Gilna P."/>
            <person name="Schmutz J."/>
            <person name="Larimer F."/>
            <person name="Land M."/>
            <person name="Hauser L."/>
            <person name="Kyrpides N."/>
            <person name="Mikhailova N."/>
            <person name="Richardson P."/>
        </authorList>
    </citation>
    <scope>NUCLEOTIDE SEQUENCE [LARGE SCALE GENOMIC DNA]</scope>
    <source>
        <strain>BNC1</strain>
    </source>
</reference>
<comment type="function">
    <text evidence="1">Negatively regulates transcription of bacterial ribonucleotide reductase nrd genes and operons by binding to NrdR-boxes.</text>
</comment>
<comment type="cofactor">
    <cofactor evidence="1">
        <name>Zn(2+)</name>
        <dbReference type="ChEBI" id="CHEBI:29105"/>
    </cofactor>
    <text evidence="1">Binds 1 zinc ion.</text>
</comment>
<comment type="similarity">
    <text evidence="1">Belongs to the NrdR family.</text>
</comment>
<gene>
    <name evidence="1" type="primary">nrdR</name>
    <name type="ordered locus">Meso_1135</name>
</gene>
<organism>
    <name type="scientific">Chelativorans sp. (strain BNC1)</name>
    <dbReference type="NCBI Taxonomy" id="266779"/>
    <lineage>
        <taxon>Bacteria</taxon>
        <taxon>Pseudomonadati</taxon>
        <taxon>Pseudomonadota</taxon>
        <taxon>Alphaproteobacteria</taxon>
        <taxon>Hyphomicrobiales</taxon>
        <taxon>Phyllobacteriaceae</taxon>
        <taxon>Chelativorans</taxon>
    </lineage>
</organism>
<dbReference type="EMBL" id="CP000390">
    <property type="protein sequence ID" value="ABG62531.1"/>
    <property type="molecule type" value="Genomic_DNA"/>
</dbReference>
<dbReference type="SMR" id="Q11J94"/>
<dbReference type="STRING" id="266779.Meso_1135"/>
<dbReference type="KEGG" id="mes:Meso_1135"/>
<dbReference type="eggNOG" id="COG1327">
    <property type="taxonomic scope" value="Bacteria"/>
</dbReference>
<dbReference type="HOGENOM" id="CLU_108412_0_1_5"/>
<dbReference type="OrthoDB" id="9807461at2"/>
<dbReference type="GO" id="GO:0005524">
    <property type="term" value="F:ATP binding"/>
    <property type="evidence" value="ECO:0007669"/>
    <property type="project" value="UniProtKB-KW"/>
</dbReference>
<dbReference type="GO" id="GO:0003677">
    <property type="term" value="F:DNA binding"/>
    <property type="evidence" value="ECO:0007669"/>
    <property type="project" value="UniProtKB-KW"/>
</dbReference>
<dbReference type="GO" id="GO:0008270">
    <property type="term" value="F:zinc ion binding"/>
    <property type="evidence" value="ECO:0007669"/>
    <property type="project" value="UniProtKB-UniRule"/>
</dbReference>
<dbReference type="GO" id="GO:0045892">
    <property type="term" value="P:negative regulation of DNA-templated transcription"/>
    <property type="evidence" value="ECO:0007669"/>
    <property type="project" value="UniProtKB-UniRule"/>
</dbReference>
<dbReference type="HAMAP" id="MF_00440">
    <property type="entry name" value="NrdR"/>
    <property type="match status" value="1"/>
</dbReference>
<dbReference type="InterPro" id="IPR005144">
    <property type="entry name" value="ATP-cone_dom"/>
</dbReference>
<dbReference type="InterPro" id="IPR055173">
    <property type="entry name" value="NrdR-like_N"/>
</dbReference>
<dbReference type="InterPro" id="IPR003796">
    <property type="entry name" value="RNR_NrdR-like"/>
</dbReference>
<dbReference type="NCBIfam" id="TIGR00244">
    <property type="entry name" value="transcriptional regulator NrdR"/>
    <property type="match status" value="1"/>
</dbReference>
<dbReference type="PANTHER" id="PTHR30455">
    <property type="entry name" value="TRANSCRIPTIONAL REPRESSOR NRDR"/>
    <property type="match status" value="1"/>
</dbReference>
<dbReference type="PANTHER" id="PTHR30455:SF2">
    <property type="entry name" value="TRANSCRIPTIONAL REPRESSOR NRDR"/>
    <property type="match status" value="1"/>
</dbReference>
<dbReference type="Pfam" id="PF03477">
    <property type="entry name" value="ATP-cone"/>
    <property type="match status" value="1"/>
</dbReference>
<dbReference type="Pfam" id="PF22811">
    <property type="entry name" value="Zn_ribbon_NrdR"/>
    <property type="match status" value="1"/>
</dbReference>
<dbReference type="PROSITE" id="PS51161">
    <property type="entry name" value="ATP_CONE"/>
    <property type="match status" value="1"/>
</dbReference>
<proteinExistence type="inferred from homology"/>
<accession>Q11J94</accession>
<evidence type="ECO:0000255" key="1">
    <source>
        <dbReference type="HAMAP-Rule" id="MF_00440"/>
    </source>
</evidence>
<keyword id="KW-0067">ATP-binding</keyword>
<keyword id="KW-0238">DNA-binding</keyword>
<keyword id="KW-0479">Metal-binding</keyword>
<keyword id="KW-0547">Nucleotide-binding</keyword>
<keyword id="KW-0678">Repressor</keyword>
<keyword id="KW-0804">Transcription</keyword>
<keyword id="KW-0805">Transcription regulation</keyword>
<keyword id="KW-0862">Zinc</keyword>
<keyword id="KW-0863">Zinc-finger</keyword>
<feature type="chain" id="PRO_0000264186" description="Transcriptional repressor NrdR">
    <location>
        <begin position="1"/>
        <end position="154"/>
    </location>
</feature>
<feature type="domain" description="ATP-cone" evidence="1">
    <location>
        <begin position="49"/>
        <end position="139"/>
    </location>
</feature>
<feature type="zinc finger region" evidence="1">
    <location>
        <begin position="3"/>
        <end position="34"/>
    </location>
</feature>
<name>NRDR_CHESB</name>
<sequence>MRCPYCQSEDTQVKDSRPAEDGAAIRRRRACPVCGGRFTTFERVQLRDLVVVKRTGRKVPFDRDKLHRSFEIALRKRNVDPDRVERAVTGIVRQLESFGENEISTDDIGLLVMEALKSLDDVAYVRYASVYRNFREAKDFQDVLGELRGEPELE</sequence>